<reference key="1">
    <citation type="journal article" date="2001" name="Nature">
        <title>Complete genome sequence of Salmonella enterica serovar Typhimurium LT2.</title>
        <authorList>
            <person name="McClelland M."/>
            <person name="Sanderson K.E."/>
            <person name="Spieth J."/>
            <person name="Clifton S.W."/>
            <person name="Latreille P."/>
            <person name="Courtney L."/>
            <person name="Porwollik S."/>
            <person name="Ali J."/>
            <person name="Dante M."/>
            <person name="Du F."/>
            <person name="Hou S."/>
            <person name="Layman D."/>
            <person name="Leonard S."/>
            <person name="Nguyen C."/>
            <person name="Scott K."/>
            <person name="Holmes A."/>
            <person name="Grewal N."/>
            <person name="Mulvaney E."/>
            <person name="Ryan E."/>
            <person name="Sun H."/>
            <person name="Florea L."/>
            <person name="Miller W."/>
            <person name="Stoneking T."/>
            <person name="Nhan M."/>
            <person name="Waterston R."/>
            <person name="Wilson R.K."/>
        </authorList>
    </citation>
    <scope>NUCLEOTIDE SEQUENCE [LARGE SCALE GENOMIC DNA]</scope>
    <source>
        <strain>LT2 / SGSC1412 / ATCC 700720</strain>
    </source>
</reference>
<feature type="chain" id="PRO_0000207568" description="UPF0149 protein YgfB">
    <location>
        <begin position="1"/>
        <end position="192"/>
    </location>
</feature>
<evidence type="ECO:0000255" key="1">
    <source>
        <dbReference type="HAMAP-Rule" id="MF_00346"/>
    </source>
</evidence>
<evidence type="ECO:0000305" key="2"/>
<name>YGFB_SALTY</name>
<comment type="similarity">
    <text evidence="1">Belongs to the UPF0149 family.</text>
</comment>
<comment type="sequence caution" evidence="2">
    <conflict type="erroneous initiation">
        <sequence resource="EMBL-CDS" id="AAL21934"/>
    </conflict>
</comment>
<accession>Q8ZM71</accession>
<protein>
    <recommendedName>
        <fullName evidence="1">UPF0149 protein YgfB</fullName>
    </recommendedName>
</protein>
<organism>
    <name type="scientific">Salmonella typhimurium (strain LT2 / SGSC1412 / ATCC 700720)</name>
    <dbReference type="NCBI Taxonomy" id="99287"/>
    <lineage>
        <taxon>Bacteria</taxon>
        <taxon>Pseudomonadati</taxon>
        <taxon>Pseudomonadota</taxon>
        <taxon>Gammaproteobacteria</taxon>
        <taxon>Enterobacterales</taxon>
        <taxon>Enterobacteriaceae</taxon>
        <taxon>Salmonella</taxon>
    </lineage>
</organism>
<proteinExistence type="inferred from homology"/>
<gene>
    <name evidence="1" type="primary">ygfB</name>
    <name type="ordered locus">STM3059</name>
</gene>
<dbReference type="EMBL" id="AE006468">
    <property type="protein sequence ID" value="AAL21934.1"/>
    <property type="status" value="ALT_INIT"/>
    <property type="molecule type" value="Genomic_DNA"/>
</dbReference>
<dbReference type="RefSeq" id="NP_461975.3">
    <property type="nucleotide sequence ID" value="NC_003197.2"/>
</dbReference>
<dbReference type="SMR" id="Q8ZM71"/>
<dbReference type="STRING" id="99287.STM3059"/>
<dbReference type="PaxDb" id="99287-STM3059"/>
<dbReference type="GeneID" id="1254582"/>
<dbReference type="KEGG" id="stm:STM3059"/>
<dbReference type="PATRIC" id="fig|99287.12.peg.3241"/>
<dbReference type="HOGENOM" id="CLU_085336_1_0_6"/>
<dbReference type="OMA" id="WVNHFIS"/>
<dbReference type="PhylomeDB" id="Q8ZM71"/>
<dbReference type="Proteomes" id="UP000001014">
    <property type="component" value="Chromosome"/>
</dbReference>
<dbReference type="GO" id="GO:0005829">
    <property type="term" value="C:cytosol"/>
    <property type="evidence" value="ECO:0000318"/>
    <property type="project" value="GO_Central"/>
</dbReference>
<dbReference type="FunFam" id="1.20.120.740:FF:000001">
    <property type="entry name" value="UPF0149 protein YgfB"/>
    <property type="match status" value="1"/>
</dbReference>
<dbReference type="Gene3D" id="1.20.120.740">
    <property type="entry name" value="YgfB uncharacterised protein family UPF0149, PF03695"/>
    <property type="match status" value="1"/>
</dbReference>
<dbReference type="HAMAP" id="MF_00346">
    <property type="entry name" value="UPF0149"/>
    <property type="match status" value="1"/>
</dbReference>
<dbReference type="InterPro" id="IPR011978">
    <property type="entry name" value="YgfB-like"/>
</dbReference>
<dbReference type="InterPro" id="IPR036255">
    <property type="entry name" value="YgfB-like_sf"/>
</dbReference>
<dbReference type="NCBIfam" id="NF002477">
    <property type="entry name" value="PRK01736.1"/>
    <property type="match status" value="1"/>
</dbReference>
<dbReference type="NCBIfam" id="TIGR02292">
    <property type="entry name" value="ygfB_yecA"/>
    <property type="match status" value="1"/>
</dbReference>
<dbReference type="PANTHER" id="PTHR37528">
    <property type="entry name" value="UPF0149 PROTEIN YGFB"/>
    <property type="match status" value="1"/>
</dbReference>
<dbReference type="PANTHER" id="PTHR37528:SF1">
    <property type="entry name" value="UPF0149 PROTEIN YGFB"/>
    <property type="match status" value="1"/>
</dbReference>
<dbReference type="Pfam" id="PF03695">
    <property type="entry name" value="UPF0149"/>
    <property type="match status" value="1"/>
</dbReference>
<dbReference type="SUPFAM" id="SSF101327">
    <property type="entry name" value="YgfB-like"/>
    <property type="match status" value="1"/>
</dbReference>
<keyword id="KW-1185">Reference proteome</keyword>
<sequence length="192" mass="21257">MSIQNEMPGYNEMNRFLNQQGAGLTPAEMHGLISGMICGGNNDSSWQPLLHDLTNEGLAFGHELAQALRKMHAATSDALEDDGFLFQLYLPEGDDVSVFDRADALAGWVNHFLLGLGVTQPKLDKVTGETGEAIDDLRNIAQLGYDESEDQEELEMSLEEIIEYVRVAALLCHDTFTRQQPTAPEVRKPTLH</sequence>